<gene>
    <name type="primary">RGP2</name>
    <name type="ordered locus">Os05g0280200</name>
    <name type="ordered locus">LOC_Os05g20050</name>
    <name type="ORF">P0048F12.8</name>
</gene>
<feature type="chain" id="PRO_0000121173" description="Ras-related protein RGP2">
    <location>
        <begin position="1"/>
        <end position="217"/>
    </location>
</feature>
<feature type="binding site" evidence="1">
    <location>
        <begin position="19"/>
        <end position="26"/>
    </location>
    <ligand>
        <name>GTP</name>
        <dbReference type="ChEBI" id="CHEBI:37565"/>
    </ligand>
</feature>
<feature type="binding site" evidence="1">
    <location>
        <begin position="67"/>
        <end position="71"/>
    </location>
    <ligand>
        <name>GTP</name>
        <dbReference type="ChEBI" id="CHEBI:37565"/>
    </ligand>
</feature>
<feature type="binding site" evidence="1">
    <location>
        <begin position="125"/>
        <end position="128"/>
    </location>
    <ligand>
        <name>GTP</name>
        <dbReference type="ChEBI" id="CHEBI:37565"/>
    </ligand>
</feature>
<feature type="lipid moiety-binding region" description="S-geranylgeranyl cysteine" evidence="1">
    <location>
        <position position="214"/>
    </location>
</feature>
<feature type="lipid moiety-binding region" description="S-geranylgeranyl cysteine" evidence="1">
    <location>
        <position position="215"/>
    </location>
</feature>
<feature type="sequence conflict" description="In Ref. 1; BAA02437." evidence="2" ref="1">
    <original>S</original>
    <variation>T</variation>
    <location>
        <position position="21"/>
    </location>
</feature>
<feature type="sequence conflict" description="In Ref. 1; BAA02437." evidence="2" ref="1">
    <original>A</original>
    <variation>R</variation>
    <location>
        <position position="192"/>
    </location>
</feature>
<comment type="subcellular location">
    <subcellularLocation>
        <location evidence="2">Cell membrane</location>
        <topology evidence="2">Lipid-anchor</topology>
        <orientation evidence="2">Cytoplasmic side</orientation>
    </subcellularLocation>
</comment>
<comment type="similarity">
    <text evidence="2">Belongs to the small GTPase superfamily. Rab family.</text>
</comment>
<protein>
    <recommendedName>
        <fullName>Ras-related protein RGP2</fullName>
    </recommendedName>
    <alternativeName>
        <fullName>GTP-binding regulatory protein RGP2</fullName>
    </alternativeName>
</protein>
<proteinExistence type="evidence at transcript level"/>
<sequence length="217" mass="23790">MGGRVDHEYSYLFKMVLIGDSGVGKSNILSRFTRNHFSLDSKSTIGVEFATKSLQMEGKTIKAQIWDTAGQERYRAITSAYYRGAVGALLVYDITKRQSFDNVHRWLRELRDHADSSIVIMMVGNKSDLIHLRAVSEDEGKALAEKEGLFFLETSAMEAVNVEEAFQTIITEVYGIVNRKALAAKEAAAASAPLPSQGKTISIDSAAGNTKRACCSA</sequence>
<reference key="1">
    <citation type="journal article" date="1993" name="Mol. Gen. Genet.">
        <title>Molecular characterization of rgp2, a gene encoding a small GTP-binding protein from rice.</title>
        <authorList>
            <person name="Youssefian S."/>
            <person name="Nakamura M."/>
            <person name="Sano H."/>
        </authorList>
    </citation>
    <scope>NUCLEOTIDE SEQUENCE [MRNA]</scope>
    <source>
        <strain>cv. Gimbozu</strain>
    </source>
</reference>
<reference key="2">
    <citation type="journal article" date="2005" name="Mol. Genet. Genomics">
        <title>A fine physical map of the rice chromosome 5.</title>
        <authorList>
            <person name="Cheng C.-H."/>
            <person name="Chung M.C."/>
            <person name="Liu S.-M."/>
            <person name="Chen S.-K."/>
            <person name="Kao F.Y."/>
            <person name="Lin S.-J."/>
            <person name="Hsiao S.-H."/>
            <person name="Tseng I.C."/>
            <person name="Hsing Y.-I.C."/>
            <person name="Wu H.-P."/>
            <person name="Chen C.-S."/>
            <person name="Shaw J.-F."/>
            <person name="Wu J."/>
            <person name="Matsumoto T."/>
            <person name="Sasaki T."/>
            <person name="Chen H.-C."/>
            <person name="Chow T.-Y."/>
        </authorList>
    </citation>
    <scope>NUCLEOTIDE SEQUENCE [LARGE SCALE GENOMIC DNA]</scope>
    <source>
        <strain>cv. Nipponbare</strain>
    </source>
</reference>
<reference key="3">
    <citation type="journal article" date="2005" name="Nature">
        <title>The map-based sequence of the rice genome.</title>
        <authorList>
            <consortium name="International rice genome sequencing project (IRGSP)"/>
        </authorList>
    </citation>
    <scope>NUCLEOTIDE SEQUENCE [LARGE SCALE GENOMIC DNA]</scope>
    <source>
        <strain>cv. Nipponbare</strain>
    </source>
</reference>
<reference key="4">
    <citation type="journal article" date="2013" name="Rice">
        <title>Improvement of the Oryza sativa Nipponbare reference genome using next generation sequence and optical map data.</title>
        <authorList>
            <person name="Kawahara Y."/>
            <person name="de la Bastide M."/>
            <person name="Hamilton J.P."/>
            <person name="Kanamori H."/>
            <person name="McCombie W.R."/>
            <person name="Ouyang S."/>
            <person name="Schwartz D.C."/>
            <person name="Tanaka T."/>
            <person name="Wu J."/>
            <person name="Zhou S."/>
            <person name="Childs K.L."/>
            <person name="Davidson R.M."/>
            <person name="Lin H."/>
            <person name="Quesada-Ocampo L."/>
            <person name="Vaillancourt B."/>
            <person name="Sakai H."/>
            <person name="Lee S.S."/>
            <person name="Kim J."/>
            <person name="Numa H."/>
            <person name="Itoh T."/>
            <person name="Buell C.R."/>
            <person name="Matsumoto T."/>
        </authorList>
    </citation>
    <scope>GENOME REANNOTATION</scope>
    <source>
        <strain>cv. Nipponbare</strain>
    </source>
</reference>
<name>RLGP2_ORYSJ</name>
<accession>Q40723</accession>
<accession>Q75IH2</accession>
<organism>
    <name type="scientific">Oryza sativa subsp. japonica</name>
    <name type="common">Rice</name>
    <dbReference type="NCBI Taxonomy" id="39947"/>
    <lineage>
        <taxon>Eukaryota</taxon>
        <taxon>Viridiplantae</taxon>
        <taxon>Streptophyta</taxon>
        <taxon>Embryophyta</taxon>
        <taxon>Tracheophyta</taxon>
        <taxon>Spermatophyta</taxon>
        <taxon>Magnoliopsida</taxon>
        <taxon>Liliopsida</taxon>
        <taxon>Poales</taxon>
        <taxon>Poaceae</taxon>
        <taxon>BOP clade</taxon>
        <taxon>Oryzoideae</taxon>
        <taxon>Oryzeae</taxon>
        <taxon>Oryzinae</taxon>
        <taxon>Oryza</taxon>
        <taxon>Oryza sativa</taxon>
    </lineage>
</organism>
<evidence type="ECO:0000250" key="1"/>
<evidence type="ECO:0000305" key="2"/>
<keyword id="KW-1003">Cell membrane</keyword>
<keyword id="KW-0342">GTP-binding</keyword>
<keyword id="KW-0449">Lipoprotein</keyword>
<keyword id="KW-0472">Membrane</keyword>
<keyword id="KW-0547">Nucleotide-binding</keyword>
<keyword id="KW-0636">Prenylation</keyword>
<keyword id="KW-1185">Reference proteome</keyword>
<dbReference type="EMBL" id="D13152">
    <property type="protein sequence ID" value="BAA02437.1"/>
    <property type="molecule type" value="mRNA"/>
</dbReference>
<dbReference type="EMBL" id="AC130609">
    <property type="protein sequence ID" value="AAS98506.1"/>
    <property type="molecule type" value="Genomic_DNA"/>
</dbReference>
<dbReference type="EMBL" id="AP014961">
    <property type="status" value="NOT_ANNOTATED_CDS"/>
    <property type="molecule type" value="Genomic_DNA"/>
</dbReference>
<dbReference type="PIR" id="S30273">
    <property type="entry name" value="S30273"/>
</dbReference>
<dbReference type="RefSeq" id="XP_015637295.1">
    <property type="nucleotide sequence ID" value="XM_015781809.1"/>
</dbReference>
<dbReference type="SMR" id="Q40723"/>
<dbReference type="FunCoup" id="Q40723">
    <property type="interactions" value="165"/>
</dbReference>
<dbReference type="STRING" id="39947.Q40723"/>
<dbReference type="PaxDb" id="39947-Q40723"/>
<dbReference type="InParanoid" id="Q40723"/>
<dbReference type="OrthoDB" id="9989112at2759"/>
<dbReference type="Proteomes" id="UP000000763">
    <property type="component" value="Chromosome 5"/>
</dbReference>
<dbReference type="Proteomes" id="UP000059680">
    <property type="component" value="Chromosome 5"/>
</dbReference>
<dbReference type="GO" id="GO:0005768">
    <property type="term" value="C:endosome"/>
    <property type="evidence" value="ECO:0000318"/>
    <property type="project" value="GO_Central"/>
</dbReference>
<dbReference type="GO" id="GO:0005794">
    <property type="term" value="C:Golgi apparatus"/>
    <property type="evidence" value="ECO:0000318"/>
    <property type="project" value="GO_Central"/>
</dbReference>
<dbReference type="GO" id="GO:0005886">
    <property type="term" value="C:plasma membrane"/>
    <property type="evidence" value="ECO:0007669"/>
    <property type="project" value="UniProtKB-SubCell"/>
</dbReference>
<dbReference type="GO" id="GO:0005525">
    <property type="term" value="F:GTP binding"/>
    <property type="evidence" value="ECO:0000318"/>
    <property type="project" value="GO_Central"/>
</dbReference>
<dbReference type="GO" id="GO:0003924">
    <property type="term" value="F:GTPase activity"/>
    <property type="evidence" value="ECO:0000318"/>
    <property type="project" value="GO_Central"/>
</dbReference>
<dbReference type="CDD" id="cd01868">
    <property type="entry name" value="Rab11_like"/>
    <property type="match status" value="1"/>
</dbReference>
<dbReference type="FunFam" id="3.40.50.300:FF:000067">
    <property type="entry name" value="ras-related protein RABA1f"/>
    <property type="match status" value="1"/>
</dbReference>
<dbReference type="Gene3D" id="3.40.50.300">
    <property type="entry name" value="P-loop containing nucleotide triphosphate hydrolases"/>
    <property type="match status" value="1"/>
</dbReference>
<dbReference type="InterPro" id="IPR027417">
    <property type="entry name" value="P-loop_NTPase"/>
</dbReference>
<dbReference type="InterPro" id="IPR050209">
    <property type="entry name" value="Rab_GTPases_membrane_traffic"/>
</dbReference>
<dbReference type="InterPro" id="IPR005225">
    <property type="entry name" value="Small_GTP-bd"/>
</dbReference>
<dbReference type="InterPro" id="IPR001806">
    <property type="entry name" value="Small_GTPase"/>
</dbReference>
<dbReference type="NCBIfam" id="TIGR00231">
    <property type="entry name" value="small_GTP"/>
    <property type="match status" value="1"/>
</dbReference>
<dbReference type="PANTHER" id="PTHR47979">
    <property type="entry name" value="DRAB11-RELATED"/>
    <property type="match status" value="1"/>
</dbReference>
<dbReference type="Pfam" id="PF00071">
    <property type="entry name" value="Ras"/>
    <property type="match status" value="1"/>
</dbReference>
<dbReference type="PRINTS" id="PR00449">
    <property type="entry name" value="RASTRNSFRMNG"/>
</dbReference>
<dbReference type="SMART" id="SM00175">
    <property type="entry name" value="RAB"/>
    <property type="match status" value="1"/>
</dbReference>
<dbReference type="SMART" id="SM00176">
    <property type="entry name" value="RAN"/>
    <property type="match status" value="1"/>
</dbReference>
<dbReference type="SMART" id="SM00173">
    <property type="entry name" value="RAS"/>
    <property type="match status" value="1"/>
</dbReference>
<dbReference type="SMART" id="SM00174">
    <property type="entry name" value="RHO"/>
    <property type="match status" value="1"/>
</dbReference>
<dbReference type="SUPFAM" id="SSF52540">
    <property type="entry name" value="P-loop containing nucleoside triphosphate hydrolases"/>
    <property type="match status" value="1"/>
</dbReference>
<dbReference type="PROSITE" id="PS51419">
    <property type="entry name" value="RAB"/>
    <property type="match status" value="1"/>
</dbReference>